<reference key="1">
    <citation type="submission" date="2006-05" db="EMBL/GenBank/DDBJ databases">
        <title>Complete sequence of chromosome 2 of Burkholderia cenocepacia AU 1054.</title>
        <authorList>
            <consortium name="US DOE Joint Genome Institute"/>
            <person name="Copeland A."/>
            <person name="Lucas S."/>
            <person name="Lapidus A."/>
            <person name="Barry K."/>
            <person name="Detter J.C."/>
            <person name="Glavina del Rio T."/>
            <person name="Hammon N."/>
            <person name="Israni S."/>
            <person name="Dalin E."/>
            <person name="Tice H."/>
            <person name="Pitluck S."/>
            <person name="Chain P."/>
            <person name="Malfatti S."/>
            <person name="Shin M."/>
            <person name="Vergez L."/>
            <person name="Schmutz J."/>
            <person name="Larimer F."/>
            <person name="Land M."/>
            <person name="Hauser L."/>
            <person name="Kyrpides N."/>
            <person name="Lykidis A."/>
            <person name="LiPuma J.J."/>
            <person name="Konstantinidis K."/>
            <person name="Tiedje J.M."/>
            <person name="Richardson P."/>
        </authorList>
    </citation>
    <scope>NUCLEOTIDE SEQUENCE [LARGE SCALE GENOMIC DNA]</scope>
    <source>
        <strain>AU 1054</strain>
    </source>
</reference>
<dbReference type="EC" id="3.1.11.6" evidence="1"/>
<dbReference type="EMBL" id="CP000379">
    <property type="protein sequence ID" value="ABF79370.1"/>
    <property type="molecule type" value="Genomic_DNA"/>
</dbReference>
<dbReference type="SMR" id="Q1BLY5"/>
<dbReference type="HOGENOM" id="CLU_145918_2_0_4"/>
<dbReference type="GO" id="GO:0005829">
    <property type="term" value="C:cytosol"/>
    <property type="evidence" value="ECO:0007669"/>
    <property type="project" value="TreeGrafter"/>
</dbReference>
<dbReference type="GO" id="GO:0009318">
    <property type="term" value="C:exodeoxyribonuclease VII complex"/>
    <property type="evidence" value="ECO:0007669"/>
    <property type="project" value="InterPro"/>
</dbReference>
<dbReference type="GO" id="GO:0008855">
    <property type="term" value="F:exodeoxyribonuclease VII activity"/>
    <property type="evidence" value="ECO:0007669"/>
    <property type="project" value="UniProtKB-UniRule"/>
</dbReference>
<dbReference type="GO" id="GO:0006308">
    <property type="term" value="P:DNA catabolic process"/>
    <property type="evidence" value="ECO:0007669"/>
    <property type="project" value="UniProtKB-UniRule"/>
</dbReference>
<dbReference type="Gene3D" id="1.10.287.1040">
    <property type="entry name" value="Exonuclease VII, small subunit"/>
    <property type="match status" value="1"/>
</dbReference>
<dbReference type="HAMAP" id="MF_00337">
    <property type="entry name" value="Exonuc_7_S"/>
    <property type="match status" value="1"/>
</dbReference>
<dbReference type="InterPro" id="IPR003761">
    <property type="entry name" value="Exonuc_VII_S"/>
</dbReference>
<dbReference type="InterPro" id="IPR037004">
    <property type="entry name" value="Exonuc_VII_ssu_sf"/>
</dbReference>
<dbReference type="NCBIfam" id="NF002141">
    <property type="entry name" value="PRK00977.1-5"/>
    <property type="match status" value="1"/>
</dbReference>
<dbReference type="NCBIfam" id="TIGR01280">
    <property type="entry name" value="xseB"/>
    <property type="match status" value="1"/>
</dbReference>
<dbReference type="PANTHER" id="PTHR34137">
    <property type="entry name" value="EXODEOXYRIBONUCLEASE 7 SMALL SUBUNIT"/>
    <property type="match status" value="1"/>
</dbReference>
<dbReference type="PANTHER" id="PTHR34137:SF1">
    <property type="entry name" value="EXODEOXYRIBONUCLEASE 7 SMALL SUBUNIT"/>
    <property type="match status" value="1"/>
</dbReference>
<dbReference type="Pfam" id="PF02609">
    <property type="entry name" value="Exonuc_VII_S"/>
    <property type="match status" value="1"/>
</dbReference>
<dbReference type="SUPFAM" id="SSF116842">
    <property type="entry name" value="XseB-like"/>
    <property type="match status" value="1"/>
</dbReference>
<accession>Q1BLY5</accession>
<feature type="chain" id="PRO_0000303693" description="Exodeoxyribonuclease 7 small subunit">
    <location>
        <begin position="1"/>
        <end position="97"/>
    </location>
</feature>
<feature type="region of interest" description="Disordered" evidence="2">
    <location>
        <begin position="1"/>
        <end position="22"/>
    </location>
</feature>
<sequence length="97" mass="10136">MAKTASPGATPPGNGTEPLPDNYEMALAELETLVARMEGGALSLEDSLAAYRRGATLVAFCQQQLEKVEQQVRVLDGATLKPLSSGTAATDGEDDDL</sequence>
<comment type="function">
    <text evidence="1">Bidirectionally degrades single-stranded DNA into large acid-insoluble oligonucleotides, which are then degraded further into small acid-soluble oligonucleotides.</text>
</comment>
<comment type="catalytic activity">
    <reaction evidence="1">
        <text>Exonucleolytic cleavage in either 5'- to 3'- or 3'- to 5'-direction to yield nucleoside 5'-phosphates.</text>
        <dbReference type="EC" id="3.1.11.6"/>
    </reaction>
</comment>
<comment type="subunit">
    <text evidence="1">Heterooligomer composed of large and small subunits.</text>
</comment>
<comment type="subcellular location">
    <subcellularLocation>
        <location evidence="1">Cytoplasm</location>
    </subcellularLocation>
</comment>
<comment type="similarity">
    <text evidence="1">Belongs to the XseB family.</text>
</comment>
<keyword id="KW-0963">Cytoplasm</keyword>
<keyword id="KW-0269">Exonuclease</keyword>
<keyword id="KW-0378">Hydrolase</keyword>
<keyword id="KW-0540">Nuclease</keyword>
<gene>
    <name evidence="1" type="primary">xseB</name>
    <name type="ordered locus">Bcen_4488</name>
</gene>
<organism>
    <name type="scientific">Burkholderia orbicola (strain AU 1054)</name>
    <dbReference type="NCBI Taxonomy" id="331271"/>
    <lineage>
        <taxon>Bacteria</taxon>
        <taxon>Pseudomonadati</taxon>
        <taxon>Pseudomonadota</taxon>
        <taxon>Betaproteobacteria</taxon>
        <taxon>Burkholderiales</taxon>
        <taxon>Burkholderiaceae</taxon>
        <taxon>Burkholderia</taxon>
        <taxon>Burkholderia cepacia complex</taxon>
        <taxon>Burkholderia orbicola</taxon>
    </lineage>
</organism>
<proteinExistence type="inferred from homology"/>
<evidence type="ECO:0000255" key="1">
    <source>
        <dbReference type="HAMAP-Rule" id="MF_00337"/>
    </source>
</evidence>
<evidence type="ECO:0000256" key="2">
    <source>
        <dbReference type="SAM" id="MobiDB-lite"/>
    </source>
</evidence>
<name>EX7S_BURO1</name>
<protein>
    <recommendedName>
        <fullName evidence="1">Exodeoxyribonuclease 7 small subunit</fullName>
        <ecNumber evidence="1">3.1.11.6</ecNumber>
    </recommendedName>
    <alternativeName>
        <fullName evidence="1">Exodeoxyribonuclease VII small subunit</fullName>
        <shortName evidence="1">Exonuclease VII small subunit</shortName>
    </alternativeName>
</protein>